<accession>Q21XW2</accession>
<dbReference type="EMBL" id="CP000267">
    <property type="protein sequence ID" value="ABD69391.1"/>
    <property type="molecule type" value="Genomic_DNA"/>
</dbReference>
<dbReference type="RefSeq" id="WP_011463959.1">
    <property type="nucleotide sequence ID" value="NC_007908.1"/>
</dbReference>
<dbReference type="SMR" id="Q21XW2"/>
<dbReference type="STRING" id="338969.Rfer_1661"/>
<dbReference type="KEGG" id="rfr:Rfer_1661"/>
<dbReference type="eggNOG" id="COG1825">
    <property type="taxonomic scope" value="Bacteria"/>
</dbReference>
<dbReference type="HOGENOM" id="CLU_075939_0_1_4"/>
<dbReference type="OrthoDB" id="9806411at2"/>
<dbReference type="Proteomes" id="UP000008332">
    <property type="component" value="Chromosome"/>
</dbReference>
<dbReference type="GO" id="GO:0022625">
    <property type="term" value="C:cytosolic large ribosomal subunit"/>
    <property type="evidence" value="ECO:0007669"/>
    <property type="project" value="TreeGrafter"/>
</dbReference>
<dbReference type="GO" id="GO:0008097">
    <property type="term" value="F:5S rRNA binding"/>
    <property type="evidence" value="ECO:0007669"/>
    <property type="project" value="InterPro"/>
</dbReference>
<dbReference type="GO" id="GO:0003735">
    <property type="term" value="F:structural constituent of ribosome"/>
    <property type="evidence" value="ECO:0007669"/>
    <property type="project" value="InterPro"/>
</dbReference>
<dbReference type="GO" id="GO:0006412">
    <property type="term" value="P:translation"/>
    <property type="evidence" value="ECO:0007669"/>
    <property type="project" value="UniProtKB-UniRule"/>
</dbReference>
<dbReference type="CDD" id="cd00495">
    <property type="entry name" value="Ribosomal_L25_TL5_CTC"/>
    <property type="match status" value="1"/>
</dbReference>
<dbReference type="Gene3D" id="2.170.120.20">
    <property type="entry name" value="Ribosomal protein L25, beta domain"/>
    <property type="match status" value="1"/>
</dbReference>
<dbReference type="Gene3D" id="2.40.240.10">
    <property type="entry name" value="Ribosomal Protein L25, Chain P"/>
    <property type="match status" value="1"/>
</dbReference>
<dbReference type="HAMAP" id="MF_01336">
    <property type="entry name" value="Ribosomal_bL25"/>
    <property type="match status" value="1"/>
</dbReference>
<dbReference type="HAMAP" id="MF_01334">
    <property type="entry name" value="Ribosomal_bL25_CTC"/>
    <property type="match status" value="1"/>
</dbReference>
<dbReference type="InterPro" id="IPR020056">
    <property type="entry name" value="Rbsml_bL25/Gln-tRNA_synth_N"/>
</dbReference>
<dbReference type="InterPro" id="IPR011035">
    <property type="entry name" value="Ribosomal_bL25/Gln-tRNA_synth"/>
</dbReference>
<dbReference type="InterPro" id="IPR020057">
    <property type="entry name" value="Ribosomal_bL25_b-dom"/>
</dbReference>
<dbReference type="InterPro" id="IPR037121">
    <property type="entry name" value="Ribosomal_bL25_C"/>
</dbReference>
<dbReference type="InterPro" id="IPR001021">
    <property type="entry name" value="Ribosomal_bL25_long"/>
</dbReference>
<dbReference type="InterPro" id="IPR020055">
    <property type="entry name" value="Ribosomal_bL25_short"/>
</dbReference>
<dbReference type="InterPro" id="IPR029751">
    <property type="entry name" value="Ribosomal_L25_dom"/>
</dbReference>
<dbReference type="InterPro" id="IPR020930">
    <property type="entry name" value="Ribosomal_uL5_bac-type"/>
</dbReference>
<dbReference type="NCBIfam" id="TIGR00731">
    <property type="entry name" value="bL25_bact_ctc"/>
    <property type="match status" value="1"/>
</dbReference>
<dbReference type="NCBIfam" id="NF004128">
    <property type="entry name" value="PRK05618.1-2"/>
    <property type="match status" value="1"/>
</dbReference>
<dbReference type="NCBIfam" id="NF004130">
    <property type="entry name" value="PRK05618.1-5"/>
    <property type="match status" value="1"/>
</dbReference>
<dbReference type="NCBIfam" id="NF004612">
    <property type="entry name" value="PRK05943.1"/>
    <property type="match status" value="1"/>
</dbReference>
<dbReference type="PANTHER" id="PTHR33284">
    <property type="entry name" value="RIBOSOMAL PROTEIN L25/GLN-TRNA SYNTHETASE, ANTI-CODON-BINDING DOMAIN-CONTAINING PROTEIN"/>
    <property type="match status" value="1"/>
</dbReference>
<dbReference type="PANTHER" id="PTHR33284:SF1">
    <property type="entry name" value="RIBOSOMAL PROTEIN L25_GLN-TRNA SYNTHETASE, ANTI-CODON-BINDING DOMAIN-CONTAINING PROTEIN"/>
    <property type="match status" value="1"/>
</dbReference>
<dbReference type="Pfam" id="PF01386">
    <property type="entry name" value="Ribosomal_L25p"/>
    <property type="match status" value="1"/>
</dbReference>
<dbReference type="Pfam" id="PF14693">
    <property type="entry name" value="Ribosomal_TL5_C"/>
    <property type="match status" value="1"/>
</dbReference>
<dbReference type="SUPFAM" id="SSF50715">
    <property type="entry name" value="Ribosomal protein L25-like"/>
    <property type="match status" value="1"/>
</dbReference>
<keyword id="KW-1185">Reference proteome</keyword>
<keyword id="KW-0687">Ribonucleoprotein</keyword>
<keyword id="KW-0689">Ribosomal protein</keyword>
<keyword id="KW-0694">RNA-binding</keyword>
<keyword id="KW-0699">rRNA-binding</keyword>
<evidence type="ECO:0000255" key="1">
    <source>
        <dbReference type="HAMAP-Rule" id="MF_01334"/>
    </source>
</evidence>
<evidence type="ECO:0000305" key="2"/>
<comment type="function">
    <text evidence="1">This is one of the proteins that binds to the 5S RNA in the ribosome where it forms part of the central protuberance.</text>
</comment>
<comment type="subunit">
    <text evidence="1">Part of the 50S ribosomal subunit; part of the 5S rRNA/L5/L18/L25 subcomplex. Contacts the 5S rRNA. Binds to the 5S rRNA independently of L5 and L18.</text>
</comment>
<comment type="similarity">
    <text evidence="1">Belongs to the bacterial ribosomal protein bL25 family. CTC subfamily.</text>
</comment>
<feature type="chain" id="PRO_0000244235" description="Large ribosomal subunit protein bL25">
    <location>
        <begin position="1"/>
        <end position="223"/>
    </location>
</feature>
<gene>
    <name evidence="1" type="primary">rplY</name>
    <name evidence="1" type="synonym">ctc</name>
    <name type="ordered locus">Rfer_1661</name>
</gene>
<reference key="1">
    <citation type="submission" date="2006-02" db="EMBL/GenBank/DDBJ databases">
        <title>Complete sequence of chromosome of Rhodoferax ferrireducens DSM 15236.</title>
        <authorList>
            <person name="Copeland A."/>
            <person name="Lucas S."/>
            <person name="Lapidus A."/>
            <person name="Barry K."/>
            <person name="Detter J.C."/>
            <person name="Glavina del Rio T."/>
            <person name="Hammon N."/>
            <person name="Israni S."/>
            <person name="Pitluck S."/>
            <person name="Brettin T."/>
            <person name="Bruce D."/>
            <person name="Han C."/>
            <person name="Tapia R."/>
            <person name="Gilna P."/>
            <person name="Kiss H."/>
            <person name="Schmutz J."/>
            <person name="Larimer F."/>
            <person name="Land M."/>
            <person name="Kyrpides N."/>
            <person name="Ivanova N."/>
            <person name="Richardson P."/>
        </authorList>
    </citation>
    <scope>NUCLEOTIDE SEQUENCE [LARGE SCALE GENOMIC DNA]</scope>
    <source>
        <strain>ATCC BAA-621 / DSM 15236 / T118</strain>
    </source>
</reference>
<sequence>MKFVAFERAKQGTGASRRLRITGRTPGIVYGGGAEPQQIEIDHNALWHALKKEAFHAAVLDMELDGKDNKVLLRDVQMHPFKQLILHVDFQRVDASTRLHMKVPLHYSGDENSPAVKTEGCIANHVITEIEVLCLPTDLPEFIAVDLSGLKKGASLHLADVALPKGVTAVTRGNKNPVLVSVVVIGAAEAPVAEAGAAPVAAAAPAAAGKAAPAAKAPAAKKK</sequence>
<organism>
    <name type="scientific">Albidiferax ferrireducens (strain ATCC BAA-621 / DSM 15236 / T118)</name>
    <name type="common">Rhodoferax ferrireducens</name>
    <dbReference type="NCBI Taxonomy" id="338969"/>
    <lineage>
        <taxon>Bacteria</taxon>
        <taxon>Pseudomonadati</taxon>
        <taxon>Pseudomonadota</taxon>
        <taxon>Betaproteobacteria</taxon>
        <taxon>Burkholderiales</taxon>
        <taxon>Comamonadaceae</taxon>
        <taxon>Rhodoferax</taxon>
    </lineage>
</organism>
<protein>
    <recommendedName>
        <fullName evidence="1">Large ribosomal subunit protein bL25</fullName>
    </recommendedName>
    <alternativeName>
        <fullName evidence="2">50S ribosomal protein L25</fullName>
    </alternativeName>
    <alternativeName>
        <fullName evidence="1">General stress protein CTC</fullName>
    </alternativeName>
</protein>
<proteinExistence type="inferred from homology"/>
<name>RL25_ALBFT</name>